<proteinExistence type="inferred from homology"/>
<feature type="chain" id="PRO_0000269940" description="Macrolide export ATP-binding/permease protein MacB">
    <location>
        <begin position="1"/>
        <end position="648"/>
    </location>
</feature>
<feature type="transmembrane region" description="Helical" evidence="1">
    <location>
        <begin position="273"/>
        <end position="293"/>
    </location>
</feature>
<feature type="transmembrane region" description="Helical" evidence="1">
    <location>
        <begin position="523"/>
        <end position="543"/>
    </location>
</feature>
<feature type="transmembrane region" description="Helical" evidence="1">
    <location>
        <begin position="576"/>
        <end position="596"/>
    </location>
</feature>
<feature type="transmembrane region" description="Helical" evidence="1">
    <location>
        <begin position="611"/>
        <end position="631"/>
    </location>
</feature>
<feature type="domain" description="ABC transporter" evidence="1">
    <location>
        <begin position="5"/>
        <end position="243"/>
    </location>
</feature>
<feature type="binding site" evidence="1">
    <location>
        <begin position="41"/>
        <end position="48"/>
    </location>
    <ligand>
        <name>ATP</name>
        <dbReference type="ChEBI" id="CHEBI:30616"/>
    </ligand>
</feature>
<comment type="function">
    <text evidence="1">Part of the tripartite efflux system MacAB-TolC. MacB is a non-canonical ABC transporter that contains transmembrane domains (TMD), which form a pore in the inner membrane, and an ATP-binding domain (NBD), which is responsible for energy generation. Confers resistance against macrolides.</text>
</comment>
<comment type="subunit">
    <text evidence="1">Homodimer. Part of the tripartite efflux system MacAB-TolC, which is composed of an inner membrane transporter, MacB, a periplasmic membrane fusion protein, MacA, and an outer membrane component, TolC. The complex forms a large protein conduit and can translocate molecules across both the inner and outer membranes. Interacts with MacA.</text>
</comment>
<comment type="subcellular location">
    <subcellularLocation>
        <location evidence="1">Cell inner membrane</location>
        <topology evidence="1">Multi-pass membrane protein</topology>
    </subcellularLocation>
</comment>
<comment type="similarity">
    <text evidence="1">Belongs to the ABC transporter superfamily. Macrolide exporter (TC 3.A.1.122) family.</text>
</comment>
<name>MACB_ECOUT</name>
<dbReference type="EC" id="7.6.2.-" evidence="1"/>
<dbReference type="EMBL" id="CP000243">
    <property type="protein sequence ID" value="ABE06370.1"/>
    <property type="molecule type" value="Genomic_DNA"/>
</dbReference>
<dbReference type="RefSeq" id="WP_000188147.1">
    <property type="nucleotide sequence ID" value="NZ_CP064825.1"/>
</dbReference>
<dbReference type="SMR" id="Q1RE44"/>
<dbReference type="KEGG" id="eci:UTI89_C0884"/>
<dbReference type="HOGENOM" id="CLU_000604_78_2_6"/>
<dbReference type="Proteomes" id="UP000001952">
    <property type="component" value="Chromosome"/>
</dbReference>
<dbReference type="GO" id="GO:0005886">
    <property type="term" value="C:plasma membrane"/>
    <property type="evidence" value="ECO:0007669"/>
    <property type="project" value="UniProtKB-SubCell"/>
</dbReference>
<dbReference type="GO" id="GO:0005524">
    <property type="term" value="F:ATP binding"/>
    <property type="evidence" value="ECO:0007669"/>
    <property type="project" value="UniProtKB-KW"/>
</dbReference>
<dbReference type="GO" id="GO:0016887">
    <property type="term" value="F:ATP hydrolysis activity"/>
    <property type="evidence" value="ECO:0007669"/>
    <property type="project" value="InterPro"/>
</dbReference>
<dbReference type="GO" id="GO:0022857">
    <property type="term" value="F:transmembrane transporter activity"/>
    <property type="evidence" value="ECO:0007669"/>
    <property type="project" value="TreeGrafter"/>
</dbReference>
<dbReference type="GO" id="GO:0046677">
    <property type="term" value="P:response to antibiotic"/>
    <property type="evidence" value="ECO:0007669"/>
    <property type="project" value="UniProtKB-KW"/>
</dbReference>
<dbReference type="CDD" id="cd03255">
    <property type="entry name" value="ABC_MJ0796_LolCDE_FtsE"/>
    <property type="match status" value="1"/>
</dbReference>
<dbReference type="FunFam" id="3.40.50.300:FF:000032">
    <property type="entry name" value="Export ABC transporter ATP-binding protein"/>
    <property type="match status" value="1"/>
</dbReference>
<dbReference type="Gene3D" id="3.40.50.300">
    <property type="entry name" value="P-loop containing nucleotide triphosphate hydrolases"/>
    <property type="match status" value="1"/>
</dbReference>
<dbReference type="InterPro" id="IPR003593">
    <property type="entry name" value="AAA+_ATPase"/>
</dbReference>
<dbReference type="InterPro" id="IPR003838">
    <property type="entry name" value="ABC3_permease_C"/>
</dbReference>
<dbReference type="InterPro" id="IPR003439">
    <property type="entry name" value="ABC_transporter-like_ATP-bd"/>
</dbReference>
<dbReference type="InterPro" id="IPR017871">
    <property type="entry name" value="ABC_transporter-like_CS"/>
</dbReference>
<dbReference type="InterPro" id="IPR017911">
    <property type="entry name" value="MacB-like_ATP-bd"/>
</dbReference>
<dbReference type="InterPro" id="IPR025857">
    <property type="entry name" value="MacB_PCD"/>
</dbReference>
<dbReference type="InterPro" id="IPR050250">
    <property type="entry name" value="Macrolide_Exporter_MacB"/>
</dbReference>
<dbReference type="InterPro" id="IPR027417">
    <property type="entry name" value="P-loop_NTPase"/>
</dbReference>
<dbReference type="NCBIfam" id="NF007826">
    <property type="entry name" value="PRK10535.1"/>
    <property type="match status" value="1"/>
</dbReference>
<dbReference type="PANTHER" id="PTHR30572:SF7">
    <property type="entry name" value="MACROLIDE EXPORT ATP-BINDING_PERMEASE PROTEIN MACB"/>
    <property type="match status" value="1"/>
</dbReference>
<dbReference type="PANTHER" id="PTHR30572">
    <property type="entry name" value="MEMBRANE COMPONENT OF TRANSPORTER-RELATED"/>
    <property type="match status" value="1"/>
</dbReference>
<dbReference type="Pfam" id="PF00005">
    <property type="entry name" value="ABC_tran"/>
    <property type="match status" value="1"/>
</dbReference>
<dbReference type="Pfam" id="PF02687">
    <property type="entry name" value="FtsX"/>
    <property type="match status" value="1"/>
</dbReference>
<dbReference type="Pfam" id="PF12704">
    <property type="entry name" value="MacB_PCD"/>
    <property type="match status" value="1"/>
</dbReference>
<dbReference type="SMART" id="SM00382">
    <property type="entry name" value="AAA"/>
    <property type="match status" value="1"/>
</dbReference>
<dbReference type="SUPFAM" id="SSF52540">
    <property type="entry name" value="P-loop containing nucleoside triphosphate hydrolases"/>
    <property type="match status" value="1"/>
</dbReference>
<dbReference type="PROSITE" id="PS00211">
    <property type="entry name" value="ABC_TRANSPORTER_1"/>
    <property type="match status" value="1"/>
</dbReference>
<dbReference type="PROSITE" id="PS50893">
    <property type="entry name" value="ABC_TRANSPORTER_2"/>
    <property type="match status" value="1"/>
</dbReference>
<dbReference type="PROSITE" id="PS51267">
    <property type="entry name" value="MACB"/>
    <property type="match status" value="1"/>
</dbReference>
<keyword id="KW-0046">Antibiotic resistance</keyword>
<keyword id="KW-0067">ATP-binding</keyword>
<keyword id="KW-0997">Cell inner membrane</keyword>
<keyword id="KW-1003">Cell membrane</keyword>
<keyword id="KW-0472">Membrane</keyword>
<keyword id="KW-0547">Nucleotide-binding</keyword>
<keyword id="KW-1278">Translocase</keyword>
<keyword id="KW-0812">Transmembrane</keyword>
<keyword id="KW-1133">Transmembrane helix</keyword>
<keyword id="KW-0813">Transport</keyword>
<gene>
    <name evidence="1" type="primary">macB</name>
    <name type="ordered locus">UTI89_C0884</name>
</gene>
<evidence type="ECO:0000255" key="1">
    <source>
        <dbReference type="HAMAP-Rule" id="MF_01720"/>
    </source>
</evidence>
<organism>
    <name type="scientific">Escherichia coli (strain UTI89 / UPEC)</name>
    <dbReference type="NCBI Taxonomy" id="364106"/>
    <lineage>
        <taxon>Bacteria</taxon>
        <taxon>Pseudomonadati</taxon>
        <taxon>Pseudomonadota</taxon>
        <taxon>Gammaproteobacteria</taxon>
        <taxon>Enterobacterales</taxon>
        <taxon>Enterobacteriaceae</taxon>
        <taxon>Escherichia</taxon>
    </lineage>
</organism>
<sequence length="648" mass="70632">MTPLLELKDIRRSYPAGDEQVEVLKGISLDIYAGEMVAIVGASGSGKSTLMNILGCLDKATSGTYRVAGQDVATLDADALAQLRREHFGFIFQRYHLLSHLTAEQNVEVPAVYAGLERKQRLLRAQELLQRLGLEDRTEYYPAQLSGGQQQRVSIARALMNGGQVILADEPTGALDSHSGEEVMAILHQLRDRGHTVIIVTHDPQVAAQAERVIEIRDGEIVRNPPAVEKVNATGGTEPVVNTASGWRQFVSGFNEALTMAWRALAANKMRTLLTMLGIIIGIASVVSIVVVGDAAKQMVLADIRSIGTNTIDVYPGKDFGDDDPQYQQALKYDDLIAIQKQPWVASATPAVSQNLRLRYNNVDVAASANGVSGDYFNVYGMTFSEGNTFNQEQLNGRAQVVVLDSNTRRQLFPHKADVVGEVILVGNMPARVIGVAEEKQSMFGSSKVLRVWLPYSTMSGRVMGQSWLNSITVRVKEGFDSAEAEQQLTRLLSLRHGKKDFFTWNMDGVLKTVEKTTRTLQLFLTLVAVISLVVGGIGVMNIMLVSVTERTREIGIRMAVGARASDVLQQFLIEAVLVCLVGGALGITLSLLIAFTLQLFLPGWEIGFSPLALLLAFLCSTVTGILFGWLPARNAARLDPVDALARE</sequence>
<reference key="1">
    <citation type="journal article" date="2006" name="Proc. Natl. Acad. Sci. U.S.A.">
        <title>Identification of genes subject to positive selection in uropathogenic strains of Escherichia coli: a comparative genomics approach.</title>
        <authorList>
            <person name="Chen S.L."/>
            <person name="Hung C.-S."/>
            <person name="Xu J."/>
            <person name="Reigstad C.S."/>
            <person name="Magrini V."/>
            <person name="Sabo A."/>
            <person name="Blasiar D."/>
            <person name="Bieri T."/>
            <person name="Meyer R.R."/>
            <person name="Ozersky P."/>
            <person name="Armstrong J.R."/>
            <person name="Fulton R.S."/>
            <person name="Latreille J.P."/>
            <person name="Spieth J."/>
            <person name="Hooton T.M."/>
            <person name="Mardis E.R."/>
            <person name="Hultgren S.J."/>
            <person name="Gordon J.I."/>
        </authorList>
    </citation>
    <scope>NUCLEOTIDE SEQUENCE [LARGE SCALE GENOMIC DNA]</scope>
    <source>
        <strain>UTI89 / UPEC</strain>
    </source>
</reference>
<protein>
    <recommendedName>
        <fullName evidence="1">Macrolide export ATP-binding/permease protein MacB</fullName>
        <ecNumber evidence="1">7.6.2.-</ecNumber>
    </recommendedName>
</protein>
<accession>Q1RE44</accession>